<sequence>MSLRGPMKHSHLRQVSAASLETLSTTRSLALSQTDGQSDKPSTPDERTIRLSSTGLDRRQCSLWVHDETFSKEEILFNQAAFTDMGVEVGDVIEILPARYPGDGTHSAKTDFGSRSLRDSHVESSSTLHSDSMSKFKTPLQSRCLFVVKPLPQDIKTRNPKLELSVTTSIANIFGFKNRTTVHISIVDRAQCAASHVDISFRDQYMVRSDMWRLVMSELAERIVYKGQKIVFTGSIKATVKNIFIRGKKVLSGFFSPQTIPVFRSESAKYVLFIQMSREMWDFDSEGTGDILFSRVINGFLPELFKRWVNSDARHLVTIVLFTRVEYDASAIASSTFSSENLTSMFGPNHVPTRDFYRVVVNDMASGHWTTILDELKKDFRTFLRDVSILNVHNADTPTFNATGASKSQPATIAGRPSTALRGNILEAIHLASSHLAFDHIDRDMVHTGTSIIVITPGSGVFEVSYESLASTTEALTNRGIAIDLVCLSPMPLHSVPLFKYREPAHRPTTAAFGDIQHGGYSPEMRHSFASISSKTPHLSPKSALLDSFTGMSSKSQWSGRSNEWNYGIPHWLDISYWNPETYRESRRILKKDPNAPIPFTVTKQSKVFVPRVRMYEIQMMGVMESEQSNISIPYLSEGPNISRATSSTLGSSPGSLVPPKATFRRNSPFRHQLSDSLRPEPFLHNMASSKDAMLTIPKKTPKTVLSWMDNYDENVFQPFRKRRHRRKPSKIKRPSEPEVKASNAHERISARSISRLRENESTRSASRQIDIPLPAPKSPVSTKSASPKKPALKSSSKTKLPRISRTISFALRGLSSTPPRAQASTEVNVEHARGLPTSNSRKLSGVLADNRSVDSLSASDSASTVIDLAPSPETPQKPIKNTAITPSRPISIKVPPKQPLQDTEQQGRPAIPESVSTTTTEIALGDDTRLTAQPRRHGPKFEVNLSSGSRNGSSKSPQSKALAPWVRSVNPCNTPREVLRDTSWFGRWQHAYPRPPHVAVVKWKSLKSPAVLPLTTEEFPTPSELASDYLQTPYRVFPNEDSEGIEAPKTRGVLLREMISLRLSHGFQIVVGKNVVEASAQYTLQSPNVFDTHALERAGATVFLSKGNSIHRLICVEGAEIEVTRYTHRTSSLLASDQKRKFTLYSPAMRTILSPEYVVKDIKLDSTYEEYNWNYADNYVAGHRDYLFNPAQQLHFWRVRYVLIPMRLHFKSRRLHGFNEDNEEEIHLLGINQLTHIWQRHKYIPPEEKRFESSNKKRDQNPLNIMYQTRNPSEVIAAELDRIILVDPGLDSSPAQLLPESELLERSGISLSSLAQIIQGEKGVRMMDRRWHWRLHYNCFIGFELTTWLLQNFRDIDSREEAVEFGNELMKHGLFQHVEKRHNFRDGNYFYQISSEYRVSRPESRGSWFPQIRPDKSVPSTPVGEASKGSPISGHTRSDSTEDTQSQTPSTPSKLKNKASITLSKTMKYDVDPRKRSNRPEVIDLHYDRLHNPENCFHIELSWMNTTPKLIEDTVLSWASTAEKFGLKLVQVPIAEACAIDKTQPFRKPYCVQLKAPPPKGPIPLQCNSESFSQPVTLDHQYFHKALLRKFDFVLDFEARSSYPADVEVSYSWGMPDYQYPQYIHRSGSVLAQITGEGDFLLLANRLVSTRSAASRDMPRHERLDRPDQYRARAGTYDPVDRISPRLSPMARPVHEVHSPLSPQGHASIDSANLYRAPEHILTGFADFCNDPARLEQFYSEAQVRATSTKVGPAPTTLTDASIPSLELPASVVSHHISPPPGLPSRSSHNIAAPLSEIRRSRDDSNMSRGSPRSGSLRPLSLT</sequence>
<feature type="chain" id="PRO_0000301764" description="Vacuolar membrane-associated protein iml1">
    <location>
        <begin position="1"/>
        <end position="1824"/>
    </location>
</feature>
<feature type="domain" description="DEP" evidence="2">
    <location>
        <begin position="1321"/>
        <end position="1396"/>
    </location>
</feature>
<feature type="region of interest" description="Disordered" evidence="3">
    <location>
        <begin position="28"/>
        <end position="48"/>
    </location>
</feature>
<feature type="region of interest" description="Disordered" evidence="3">
    <location>
        <begin position="644"/>
        <end position="682"/>
    </location>
</feature>
<feature type="region of interest" description="Disordered" evidence="3">
    <location>
        <begin position="719"/>
        <end position="964"/>
    </location>
</feature>
<feature type="region of interest" description="Disordered" evidence="3">
    <location>
        <begin position="1406"/>
        <end position="1460"/>
    </location>
</feature>
<feature type="region of interest" description="Disordered" evidence="3">
    <location>
        <begin position="1797"/>
        <end position="1824"/>
    </location>
</feature>
<feature type="compositionally biased region" description="Polar residues" evidence="3">
    <location>
        <begin position="28"/>
        <end position="41"/>
    </location>
</feature>
<feature type="compositionally biased region" description="Low complexity" evidence="3">
    <location>
        <begin position="646"/>
        <end position="659"/>
    </location>
</feature>
<feature type="compositionally biased region" description="Basic residues" evidence="3">
    <location>
        <begin position="720"/>
        <end position="733"/>
    </location>
</feature>
<feature type="compositionally biased region" description="Basic and acidic residues" evidence="3">
    <location>
        <begin position="734"/>
        <end position="762"/>
    </location>
</feature>
<feature type="compositionally biased region" description="Low complexity" evidence="3">
    <location>
        <begin position="779"/>
        <end position="799"/>
    </location>
</feature>
<feature type="compositionally biased region" description="Polar residues" evidence="3">
    <location>
        <begin position="815"/>
        <end position="828"/>
    </location>
</feature>
<feature type="compositionally biased region" description="Low complexity" evidence="3">
    <location>
        <begin position="854"/>
        <end position="864"/>
    </location>
</feature>
<feature type="compositionally biased region" description="Low complexity" evidence="3">
    <location>
        <begin position="947"/>
        <end position="961"/>
    </location>
</feature>
<feature type="compositionally biased region" description="Polar residues" evidence="3">
    <location>
        <begin position="1444"/>
        <end position="1460"/>
    </location>
</feature>
<feature type="compositionally biased region" description="Basic and acidic residues" evidence="3">
    <location>
        <begin position="1798"/>
        <end position="1807"/>
    </location>
</feature>
<feature type="compositionally biased region" description="Low complexity" evidence="3">
    <location>
        <begin position="1809"/>
        <end position="1824"/>
    </location>
</feature>
<dbReference type="EMBL" id="BA000050">
    <property type="protein sequence ID" value="BAE57146.1"/>
    <property type="status" value="ALT_SEQ"/>
    <property type="molecule type" value="Genomic_DNA"/>
</dbReference>
<dbReference type="STRING" id="510516.Q2UMR9"/>
<dbReference type="EnsemblFungi" id="BAE57146">
    <property type="protein sequence ID" value="BAE57146"/>
    <property type="gene ID" value="AO090001000648"/>
</dbReference>
<dbReference type="Proteomes" id="UP000006564">
    <property type="component" value="Chromosome 2"/>
</dbReference>
<dbReference type="GO" id="GO:1990130">
    <property type="term" value="C:GATOR1 complex"/>
    <property type="evidence" value="ECO:0007669"/>
    <property type="project" value="TreeGrafter"/>
</dbReference>
<dbReference type="GO" id="GO:0005774">
    <property type="term" value="C:vacuolar membrane"/>
    <property type="evidence" value="ECO:0007669"/>
    <property type="project" value="UniProtKB-SubCell"/>
</dbReference>
<dbReference type="GO" id="GO:0005096">
    <property type="term" value="F:GTPase activator activity"/>
    <property type="evidence" value="ECO:0007669"/>
    <property type="project" value="InterPro"/>
</dbReference>
<dbReference type="GO" id="GO:0035556">
    <property type="term" value="P:intracellular signal transduction"/>
    <property type="evidence" value="ECO:0007669"/>
    <property type="project" value="InterPro"/>
</dbReference>
<dbReference type="GO" id="GO:1904262">
    <property type="term" value="P:negative regulation of TORC1 signaling"/>
    <property type="evidence" value="ECO:0007669"/>
    <property type="project" value="TreeGrafter"/>
</dbReference>
<dbReference type="GO" id="GO:0010508">
    <property type="term" value="P:positive regulation of autophagy"/>
    <property type="evidence" value="ECO:0007669"/>
    <property type="project" value="TreeGrafter"/>
</dbReference>
<dbReference type="CDD" id="cd04449">
    <property type="entry name" value="DEP_DEPDC5-like"/>
    <property type="match status" value="1"/>
</dbReference>
<dbReference type="FunFam" id="1.10.10.10:FF:001090">
    <property type="entry name" value="Vacuolar membrane-associated protein iml1"/>
    <property type="match status" value="1"/>
</dbReference>
<dbReference type="Gene3D" id="1.10.10.10">
    <property type="entry name" value="Winged helix-like DNA-binding domain superfamily/Winged helix DNA-binding domain"/>
    <property type="match status" value="1"/>
</dbReference>
<dbReference type="InterPro" id="IPR000591">
    <property type="entry name" value="DEP_dom"/>
</dbReference>
<dbReference type="InterPro" id="IPR045838">
    <property type="entry name" value="DEPDC5_CTD"/>
</dbReference>
<dbReference type="InterPro" id="IPR027244">
    <property type="entry name" value="IML1"/>
</dbReference>
<dbReference type="InterPro" id="IPR048255">
    <property type="entry name" value="IML1_N"/>
</dbReference>
<dbReference type="InterPro" id="IPR036388">
    <property type="entry name" value="WH-like_DNA-bd_sf"/>
</dbReference>
<dbReference type="InterPro" id="IPR036390">
    <property type="entry name" value="WH_DNA-bd_sf"/>
</dbReference>
<dbReference type="PANTHER" id="PTHR13179">
    <property type="entry name" value="DEP DOMAIN CONTAINING PROTEIN 5"/>
    <property type="match status" value="1"/>
</dbReference>
<dbReference type="PANTHER" id="PTHR13179:SF8">
    <property type="entry name" value="GATOR COMPLEX PROTEIN DEPDC5"/>
    <property type="match status" value="1"/>
</dbReference>
<dbReference type="Pfam" id="PF00610">
    <property type="entry name" value="DEP"/>
    <property type="match status" value="1"/>
</dbReference>
<dbReference type="Pfam" id="PF19418">
    <property type="entry name" value="DEPDC5_CTD"/>
    <property type="match status" value="1"/>
</dbReference>
<dbReference type="Pfam" id="PF12257">
    <property type="entry name" value="IML1"/>
    <property type="match status" value="1"/>
</dbReference>
<dbReference type="Pfam" id="PF24438">
    <property type="entry name" value="IML1_N_fung"/>
    <property type="match status" value="1"/>
</dbReference>
<dbReference type="SMART" id="SM00049">
    <property type="entry name" value="DEP"/>
    <property type="match status" value="1"/>
</dbReference>
<dbReference type="SUPFAM" id="SSF46785">
    <property type="entry name" value="Winged helix' DNA-binding domain"/>
    <property type="match status" value="1"/>
</dbReference>
<dbReference type="PROSITE" id="PS50186">
    <property type="entry name" value="DEP"/>
    <property type="match status" value="1"/>
</dbReference>
<gene>
    <name type="primary">iml1</name>
    <name type="ORF">AO090001000648</name>
</gene>
<evidence type="ECO:0000250" key="1"/>
<evidence type="ECO:0000255" key="2">
    <source>
        <dbReference type="PROSITE-ProRule" id="PRU00066"/>
    </source>
</evidence>
<evidence type="ECO:0000256" key="3">
    <source>
        <dbReference type="SAM" id="MobiDB-lite"/>
    </source>
</evidence>
<evidence type="ECO:0000305" key="4"/>
<comment type="subcellular location">
    <subcellularLocation>
        <location evidence="1">Vacuole membrane</location>
        <topology evidence="1">Peripheral membrane protein</topology>
    </subcellularLocation>
</comment>
<comment type="similarity">
    <text evidence="4">Belongs to the IML1 family.</text>
</comment>
<comment type="sequence caution" evidence="4">
    <conflict type="erroneous gene model prediction">
        <sequence resource="EMBL-CDS" id="BAE57146"/>
    </conflict>
</comment>
<comment type="sequence caution" evidence="4">
    <conflict type="erroneous initiation">
        <sequence resource="EMBL-CDS" id="BAE57146"/>
    </conflict>
    <text>Truncated N-terminus.</text>
</comment>
<name>IML1_ASPOR</name>
<protein>
    <recommendedName>
        <fullName>Vacuolar membrane-associated protein iml1</fullName>
    </recommendedName>
</protein>
<reference key="1">
    <citation type="journal article" date="2005" name="Nature">
        <title>Genome sequencing and analysis of Aspergillus oryzae.</title>
        <authorList>
            <person name="Machida M."/>
            <person name="Asai K."/>
            <person name="Sano M."/>
            <person name="Tanaka T."/>
            <person name="Kumagai T."/>
            <person name="Terai G."/>
            <person name="Kusumoto K."/>
            <person name="Arima T."/>
            <person name="Akita O."/>
            <person name="Kashiwagi Y."/>
            <person name="Abe K."/>
            <person name="Gomi K."/>
            <person name="Horiuchi H."/>
            <person name="Kitamoto K."/>
            <person name="Kobayashi T."/>
            <person name="Takeuchi M."/>
            <person name="Denning D.W."/>
            <person name="Galagan J.E."/>
            <person name="Nierman W.C."/>
            <person name="Yu J."/>
            <person name="Archer D.B."/>
            <person name="Bennett J.W."/>
            <person name="Bhatnagar D."/>
            <person name="Cleveland T.E."/>
            <person name="Fedorova N.D."/>
            <person name="Gotoh O."/>
            <person name="Horikawa H."/>
            <person name="Hosoyama A."/>
            <person name="Ichinomiya M."/>
            <person name="Igarashi R."/>
            <person name="Iwashita K."/>
            <person name="Juvvadi P.R."/>
            <person name="Kato M."/>
            <person name="Kato Y."/>
            <person name="Kin T."/>
            <person name="Kokubun A."/>
            <person name="Maeda H."/>
            <person name="Maeyama N."/>
            <person name="Maruyama J."/>
            <person name="Nagasaki H."/>
            <person name="Nakajima T."/>
            <person name="Oda K."/>
            <person name="Okada K."/>
            <person name="Paulsen I."/>
            <person name="Sakamoto K."/>
            <person name="Sawano T."/>
            <person name="Takahashi M."/>
            <person name="Takase K."/>
            <person name="Terabayashi Y."/>
            <person name="Wortman J.R."/>
            <person name="Yamada O."/>
            <person name="Yamagata Y."/>
            <person name="Anazawa H."/>
            <person name="Hata Y."/>
            <person name="Koide Y."/>
            <person name="Komori T."/>
            <person name="Koyama Y."/>
            <person name="Minetoki T."/>
            <person name="Suharnan S."/>
            <person name="Tanaka A."/>
            <person name="Isono K."/>
            <person name="Kuhara S."/>
            <person name="Ogasawara N."/>
            <person name="Kikuchi H."/>
        </authorList>
    </citation>
    <scope>NUCLEOTIDE SEQUENCE [LARGE SCALE GENOMIC DNA]</scope>
    <source>
        <strain>ATCC 42149 / RIB 40</strain>
    </source>
</reference>
<organism>
    <name type="scientific">Aspergillus oryzae (strain ATCC 42149 / RIB 40)</name>
    <name type="common">Yellow koji mold</name>
    <dbReference type="NCBI Taxonomy" id="510516"/>
    <lineage>
        <taxon>Eukaryota</taxon>
        <taxon>Fungi</taxon>
        <taxon>Dikarya</taxon>
        <taxon>Ascomycota</taxon>
        <taxon>Pezizomycotina</taxon>
        <taxon>Eurotiomycetes</taxon>
        <taxon>Eurotiomycetidae</taxon>
        <taxon>Eurotiales</taxon>
        <taxon>Aspergillaceae</taxon>
        <taxon>Aspergillus</taxon>
        <taxon>Aspergillus subgen. Circumdati</taxon>
    </lineage>
</organism>
<accession>Q2UMR9</accession>
<keyword id="KW-0472">Membrane</keyword>
<keyword id="KW-1185">Reference proteome</keyword>
<keyword id="KW-0926">Vacuole</keyword>
<proteinExistence type="inferred from homology"/>